<name>PSB10_HUMAN</name>
<feature type="propeptide" id="PRO_0000026651" description="Removed in mature form" evidence="1">
    <location>
        <begin position="1"/>
        <end position="39"/>
    </location>
</feature>
<feature type="chain" id="PRO_0000026652" description="Proteasome subunit beta type-10">
    <location>
        <begin position="40"/>
        <end position="273"/>
    </location>
</feature>
<feature type="active site" description="Nucleophile" evidence="1">
    <location>
        <position position="40"/>
    </location>
</feature>
<feature type="site" description="Cleavage; by autolysis" evidence="2">
    <location>
        <begin position="39"/>
        <end position="40"/>
    </location>
</feature>
<feature type="modified residue" description="N-acetylmethionine" evidence="16">
    <location>
        <position position="1"/>
    </location>
</feature>
<feature type="modified residue" description="Phosphoserine" evidence="17">
    <location>
        <position position="230"/>
    </location>
</feature>
<feature type="sequence variant" id="VAR_085404" description="In PRAAS5; uncertain significance; impaired autocleavage and maturation; dbSNP:rs2058265858." evidence="12">
    <original>F</original>
    <variation>S</variation>
    <location>
        <position position="14"/>
    </location>
</feature>
<feature type="sequence variant" id="VAR_089741" description="In IMD121; uncertain significance." evidence="13">
    <original>D</original>
    <variation>H</variation>
    <location>
        <position position="56"/>
    </location>
</feature>
<feature type="sequence variant" id="VAR_089742" description="In IMD121; likely pathogenic; dbSNP:rs1333515119." evidence="13">
    <original>G</original>
    <variation>R</variation>
    <location>
        <position position="201"/>
    </location>
</feature>
<feature type="strand" evidence="19">
    <location>
        <begin position="42"/>
        <end position="47"/>
    </location>
</feature>
<feature type="strand" evidence="19">
    <location>
        <begin position="50"/>
        <end position="55"/>
    </location>
</feature>
<feature type="strand" evidence="19">
    <location>
        <begin position="59"/>
        <end position="69"/>
    </location>
</feature>
<feature type="strand" evidence="19">
    <location>
        <begin position="73"/>
        <end position="77"/>
    </location>
</feature>
<feature type="strand" evidence="19">
    <location>
        <begin position="80"/>
        <end position="87"/>
    </location>
</feature>
<feature type="helix" evidence="19">
    <location>
        <begin position="88"/>
        <end position="109"/>
    </location>
</feature>
<feature type="helix" evidence="19">
    <location>
        <begin position="115"/>
        <end position="128"/>
    </location>
</feature>
<feature type="turn" evidence="19">
    <location>
        <begin position="129"/>
        <end position="131"/>
    </location>
</feature>
<feature type="strand" evidence="19">
    <location>
        <begin position="135"/>
        <end position="143"/>
    </location>
</feature>
<feature type="strand" evidence="19">
    <location>
        <begin position="146"/>
        <end position="152"/>
    </location>
</feature>
<feature type="strand" evidence="19">
    <location>
        <begin position="158"/>
        <end position="160"/>
    </location>
</feature>
<feature type="strand" evidence="19">
    <location>
        <begin position="162"/>
        <end position="167"/>
    </location>
</feature>
<feature type="helix" evidence="19">
    <location>
        <begin position="170"/>
        <end position="180"/>
    </location>
</feature>
<feature type="helix" evidence="19">
    <location>
        <begin position="187"/>
        <end position="204"/>
    </location>
</feature>
<feature type="strand" evidence="18">
    <location>
        <begin position="205"/>
        <end position="207"/>
    </location>
</feature>
<feature type="strand" evidence="19">
    <location>
        <begin position="212"/>
        <end position="218"/>
    </location>
</feature>
<feature type="strand" evidence="19">
    <location>
        <begin position="221"/>
        <end position="229"/>
    </location>
</feature>
<feature type="strand" evidence="19">
    <location>
        <begin position="250"/>
        <end position="257"/>
    </location>
</feature>
<feature type="turn" evidence="19">
    <location>
        <begin position="259"/>
        <end position="261"/>
    </location>
</feature>
<sequence length="273" mass="28936">MLKPALEPRGGFSFENCQRNASLERVLPGLKVPHARKTGTTIAGLVFQDGVILGADTRATNDSVVADKSCEKIHFIAPKIYCCGAGVAADAEMTTRMVASKMELHALSTGREPRVATVTRILRQTLFRYQGHVGASLIVGGVDLTGPQLYGVHPHGSYSRLPFTALGSGQDAALAVLEDRFQPNMTLEAAQGLLVEAVTAGILGDLGSGGNVDACVITKTGAKLLRTLSSPTEPVKRSGRYHFVPGTTAVLTQTVKPLTLELVEETVQAMEVE</sequence>
<keyword id="KW-0002">3D-structure</keyword>
<keyword id="KW-0007">Acetylation</keyword>
<keyword id="KW-0963">Cytoplasm</keyword>
<keyword id="KW-0225">Disease variant</keyword>
<keyword id="KW-0945">Host-virus interaction</keyword>
<keyword id="KW-0378">Hydrolase</keyword>
<keyword id="KW-0539">Nucleus</keyword>
<keyword id="KW-0597">Phosphoprotein</keyword>
<keyword id="KW-0645">Protease</keyword>
<keyword id="KW-0647">Proteasome</keyword>
<keyword id="KW-1267">Proteomics identification</keyword>
<keyword id="KW-1185">Reference proteome</keyword>
<keyword id="KW-0888">Threonine protease</keyword>
<keyword id="KW-0865">Zymogen</keyword>
<organism>
    <name type="scientific">Homo sapiens</name>
    <name type="common">Human</name>
    <dbReference type="NCBI Taxonomy" id="9606"/>
    <lineage>
        <taxon>Eukaryota</taxon>
        <taxon>Metazoa</taxon>
        <taxon>Chordata</taxon>
        <taxon>Craniata</taxon>
        <taxon>Vertebrata</taxon>
        <taxon>Euteleostomi</taxon>
        <taxon>Mammalia</taxon>
        <taxon>Eutheria</taxon>
        <taxon>Euarchontoglires</taxon>
        <taxon>Primates</taxon>
        <taxon>Haplorrhini</taxon>
        <taxon>Catarrhini</taxon>
        <taxon>Hominidae</taxon>
        <taxon>Homo</taxon>
    </lineage>
</organism>
<accession>P40306</accession>
<accession>B2R5J4</accession>
<accession>Q5U098</accession>
<gene>
    <name type="primary">PSMB10</name>
    <name type="synonym">LMP10</name>
    <name type="synonym">MECL1</name>
</gene>
<comment type="function">
    <text>The proteasome is a multicatalytic proteinase complex which is characterized by its ability to cleave peptides with Arg, Phe, Tyr, Leu, and Glu adjacent to the leaving group at neutral or slightly basic pH. The proteasome has an ATP-dependent proteolytic activity. This subunit is involved in antigen processing to generate class I binding peptides.</text>
</comment>
<comment type="catalytic activity">
    <reaction>
        <text>Cleavage of peptide bonds with very broad specificity.</text>
        <dbReference type="EC" id="3.4.25.1"/>
    </reaction>
</comment>
<comment type="subunit">
    <text evidence="7">The 26S proteasome consists of a 20S proteasome core and two 19S regulatory subunits. The 20S proteasome core is composed of 28 subunits that are arranged in four stacked rings, resulting in a barrel-shaped structure. The two end rings are each formed by seven alpha subunits, and the two central rings are each formed by seven beta subunits. The catalytic chamber with the active sites is on the inside of the barrel. Component of the immunoproteasome, where it displaces the equivalent housekeeping subunit PSMB7. Component of the spermatoproteasome, a form of the proteasome specifically found in testis.</text>
</comment>
<comment type="subunit">
    <text evidence="7">(Microbial infection) Interacts with HIV-1 TAT protein.</text>
</comment>
<comment type="interaction">
    <interactant intactId="EBI-603329">
        <id>P40306</id>
    </interactant>
    <interactant intactId="EBI-748961">
        <id>O95273</id>
        <label>CCNDBP1</label>
    </interactant>
    <organismsDiffer>false</organismsDiffer>
    <experiments>5</experiments>
</comment>
<comment type="interaction">
    <interactant intactId="EBI-603329">
        <id>P40306</id>
    </interactant>
    <interactant intactId="EBI-748171">
        <id>O43186</id>
        <label>CRX</label>
    </interactant>
    <organismsDiffer>false</organismsDiffer>
    <experiments>3</experiments>
</comment>
<comment type="interaction">
    <interactant intactId="EBI-603329">
        <id>P40306</id>
    </interactant>
    <interactant intactId="EBI-10976677">
        <id>G5E9A7</id>
        <label>DMWD</label>
    </interactant>
    <organismsDiffer>false</organismsDiffer>
    <experiments>3</experiments>
</comment>
<comment type="interaction">
    <interactant intactId="EBI-603329">
        <id>P40306</id>
    </interactant>
    <interactant intactId="EBI-747754">
        <id>P28799</id>
        <label>GRN</label>
    </interactant>
    <organismsDiffer>false</organismsDiffer>
    <experiments>3</experiments>
</comment>
<comment type="interaction">
    <interactant intactId="EBI-603329">
        <id>P40306</id>
    </interactant>
    <interactant intactId="EBI-748397">
        <id>P50222</id>
        <label>MEOX2</label>
    </interactant>
    <organismsDiffer>false</organismsDiffer>
    <experiments>3</experiments>
</comment>
<comment type="interaction">
    <interactant intactId="EBI-603329">
        <id>P40306</id>
    </interactant>
    <interactant intactId="EBI-21251460">
        <id>O60260-5</id>
        <label>PRKN</label>
    </interactant>
    <organismsDiffer>false</organismsDiffer>
    <experiments>3</experiments>
</comment>
<comment type="interaction">
    <interactant intactId="EBI-603329">
        <id>P40306</id>
    </interactant>
    <interactant intactId="EBI-603340">
        <id>P49720</id>
        <label>PSMB3</label>
    </interactant>
    <organismsDiffer>false</organismsDiffer>
    <experiments>5</experiments>
</comment>
<comment type="interaction">
    <interactant intactId="EBI-603329">
        <id>P40306</id>
    </interactant>
    <interactant intactId="EBI-396669">
        <id>Q9Y3C5</id>
        <label>RNF11</label>
    </interactant>
    <organismsDiffer>false</organismsDiffer>
    <experiments>3</experiments>
</comment>
<comment type="interaction">
    <interactant intactId="EBI-603329">
        <id>P40306</id>
    </interactant>
    <interactant intactId="EBI-5235340">
        <id>Q7Z699</id>
        <label>SPRED1</label>
    </interactant>
    <organismsDiffer>false</organismsDiffer>
    <experiments>3</experiments>
</comment>
<comment type="subcellular location">
    <subcellularLocation>
        <location evidence="3">Cytoplasm</location>
    </subcellularLocation>
    <subcellularLocation>
        <location evidence="1">Nucleus</location>
    </subcellularLocation>
</comment>
<comment type="developmental stage">
    <text evidence="6">Highly expressed in immature dendritic cells (at protein level).</text>
</comment>
<comment type="induction">
    <text evidence="4 5 8 9 10 11 14">Up-regulated by IFNG/IFN-gamma (at protein level). Up-regulated by IRF1. Up-regulated by TNF (at protein level). Up-regulated by tetrodotoxin (TTX) in glial cells. Up-regulated in Crohn's bowel disease (CD). Up-regulated by CD40L via the NFKB1 pathway in cancer cells.</text>
</comment>
<comment type="PTM">
    <text evidence="2">Autocleaved. The resulting N-terminal Thr residue of the mature subunit is responsible for the nucleophile proteolytic activity.</text>
</comment>
<comment type="disease" evidence="12">
    <disease id="DI-06029">
        <name>Proteasome-associated autoinflammatory syndrome 5</name>
        <acronym>PRAAS5</acronym>
        <description>An autosomal recessive, autoinflammatory disorder characterized by recurrent, polymorphic disseminated cutaneous rash with annular lesions, non-specific lymphocytic infiltration in the skin, fever, failure to thrive, and persistent hepatosplenomegaly. Disease onset is in early infancy.</description>
        <dbReference type="MIM" id="619175"/>
    </disease>
    <text>The disease may be caused by variants affecting the gene represented in this entry.</text>
</comment>
<comment type="disease" evidence="13">
    <disease id="DI-06912">
        <name>Immunodeficiency 121 with autoinflammation</name>
        <acronym>IMD121</acronym>
        <description>An autosomal dominant immunologic disorder characterized by severe combined immunodeficiency with T- and B-cell lymphopenia and low-normal NK cell numbers, failure to thrive, diarrhea, alopecia, and desquamating erythematous rash. Remaining T cells have limited T-cell receptor repertoires, a skewed memory phenotype, and an elevated CD4/CD8 ratio. Bone marrow examination indicates severely impaired B-cell maturation with limited V(D)J recombination.</description>
        <dbReference type="MIM" id="620807"/>
    </disease>
    <text>The disease is caused by variants affecting the gene represented in this entry.</text>
</comment>
<comment type="similarity">
    <text evidence="3">Belongs to the peptidase T1B family.</text>
</comment>
<evidence type="ECO:0000250" key="1"/>
<evidence type="ECO:0000250" key="2">
    <source>
        <dbReference type="UniProtKB" id="O35955"/>
    </source>
</evidence>
<evidence type="ECO:0000255" key="3">
    <source>
        <dbReference type="PROSITE-ProRule" id="PRU00809"/>
    </source>
</evidence>
<evidence type="ECO:0000269" key="4">
    <source>
    </source>
</evidence>
<evidence type="ECO:0000269" key="5">
    <source>
    </source>
</evidence>
<evidence type="ECO:0000269" key="6">
    <source>
    </source>
</evidence>
<evidence type="ECO:0000269" key="7">
    <source>
    </source>
</evidence>
<evidence type="ECO:0000269" key="8">
    <source>
    </source>
</evidence>
<evidence type="ECO:0000269" key="9">
    <source>
    </source>
</evidence>
<evidence type="ECO:0000269" key="10">
    <source>
    </source>
</evidence>
<evidence type="ECO:0000269" key="11">
    <source>
    </source>
</evidence>
<evidence type="ECO:0000269" key="12">
    <source>
    </source>
</evidence>
<evidence type="ECO:0000269" key="13">
    <source>
    </source>
</evidence>
<evidence type="ECO:0000269" key="14">
    <source>
    </source>
</evidence>
<evidence type="ECO:0000303" key="15">
    <source>
    </source>
</evidence>
<evidence type="ECO:0007744" key="16">
    <source>
    </source>
</evidence>
<evidence type="ECO:0007744" key="17">
    <source>
    </source>
</evidence>
<evidence type="ECO:0007829" key="18">
    <source>
        <dbReference type="PDB" id="6E5B"/>
    </source>
</evidence>
<evidence type="ECO:0007829" key="19">
    <source>
        <dbReference type="PDB" id="7AWE"/>
    </source>
</evidence>
<proteinExistence type="evidence at protein level"/>
<protein>
    <recommendedName>
        <fullName>Proteasome subunit beta type-10</fullName>
        <ecNumber>3.4.25.1</ecNumber>
    </recommendedName>
    <alternativeName>
        <fullName>Low molecular mass protein 10</fullName>
    </alternativeName>
    <alternativeName>
        <fullName>Macropain subunit MECl-1</fullName>
    </alternativeName>
    <alternativeName>
        <fullName>Multicatalytic endopeptidase complex subunit MECl-1</fullName>
    </alternativeName>
    <alternativeName>
        <fullName>Proteasome MECl-1</fullName>
    </alternativeName>
    <alternativeName>
        <fullName evidence="15">Proteasome subunit beta-2i</fullName>
    </alternativeName>
</protein>
<reference key="1">
    <citation type="journal article" date="1993" name="Hum. Mol. Genet.">
        <title>A tight cluster of five unrelated human genes on chromosome 16q22.1.</title>
        <authorList>
            <person name="Larsen F."/>
            <person name="Solheim J."/>
            <person name="Kristensen T."/>
            <person name="Kolstoe A.-B."/>
            <person name="Prydz H."/>
        </authorList>
    </citation>
    <scope>NUCLEOTIDE SEQUENCE [GENOMIC DNA]</scope>
</reference>
<reference key="2">
    <citation type="journal article" date="1998" name="Biochim. Biophys. Acta">
        <title>Constitutive and interferon-gamma-induced expression of the human proteasome subunit multicatalytic endopeptidase complex-like 1.</title>
        <authorList>
            <person name="Foss G.S."/>
            <person name="Larsen F."/>
            <person name="Solheim J."/>
            <person name="Prydz H."/>
        </authorList>
    </citation>
    <scope>NUCLEOTIDE SEQUENCE [MRNA]</scope>
</reference>
<reference key="3">
    <citation type="submission" date="2004-10" db="EMBL/GenBank/DDBJ databases">
        <title>Cloning of human full-length CDSs in BD Creator(TM) system donor vector.</title>
        <authorList>
            <person name="Kalnine N."/>
            <person name="Chen X."/>
            <person name="Rolfs A."/>
            <person name="Halleck A."/>
            <person name="Hines L."/>
            <person name="Eisenstein S."/>
            <person name="Koundinya M."/>
            <person name="Raphael J."/>
            <person name="Moreira D."/>
            <person name="Kelley T."/>
            <person name="LaBaer J."/>
            <person name="Lin Y."/>
            <person name="Phelan M."/>
            <person name="Farmer A."/>
        </authorList>
    </citation>
    <scope>NUCLEOTIDE SEQUENCE [LARGE SCALE MRNA]</scope>
</reference>
<reference key="4">
    <citation type="journal article" date="2004" name="Nat. Genet.">
        <title>Complete sequencing and characterization of 21,243 full-length human cDNAs.</title>
        <authorList>
            <person name="Ota T."/>
            <person name="Suzuki Y."/>
            <person name="Nishikawa T."/>
            <person name="Otsuki T."/>
            <person name="Sugiyama T."/>
            <person name="Irie R."/>
            <person name="Wakamatsu A."/>
            <person name="Hayashi K."/>
            <person name="Sato H."/>
            <person name="Nagai K."/>
            <person name="Kimura K."/>
            <person name="Makita H."/>
            <person name="Sekine M."/>
            <person name="Obayashi M."/>
            <person name="Nishi T."/>
            <person name="Shibahara T."/>
            <person name="Tanaka T."/>
            <person name="Ishii S."/>
            <person name="Yamamoto J."/>
            <person name="Saito K."/>
            <person name="Kawai Y."/>
            <person name="Isono Y."/>
            <person name="Nakamura Y."/>
            <person name="Nagahari K."/>
            <person name="Murakami K."/>
            <person name="Yasuda T."/>
            <person name="Iwayanagi T."/>
            <person name="Wagatsuma M."/>
            <person name="Shiratori A."/>
            <person name="Sudo H."/>
            <person name="Hosoiri T."/>
            <person name="Kaku Y."/>
            <person name="Kodaira H."/>
            <person name="Kondo H."/>
            <person name="Sugawara M."/>
            <person name="Takahashi M."/>
            <person name="Kanda K."/>
            <person name="Yokoi T."/>
            <person name="Furuya T."/>
            <person name="Kikkawa E."/>
            <person name="Omura Y."/>
            <person name="Abe K."/>
            <person name="Kamihara K."/>
            <person name="Katsuta N."/>
            <person name="Sato K."/>
            <person name="Tanikawa M."/>
            <person name="Yamazaki M."/>
            <person name="Ninomiya K."/>
            <person name="Ishibashi T."/>
            <person name="Yamashita H."/>
            <person name="Murakawa K."/>
            <person name="Fujimori K."/>
            <person name="Tanai H."/>
            <person name="Kimata M."/>
            <person name="Watanabe M."/>
            <person name="Hiraoka S."/>
            <person name="Chiba Y."/>
            <person name="Ishida S."/>
            <person name="Ono Y."/>
            <person name="Takiguchi S."/>
            <person name="Watanabe S."/>
            <person name="Yosida M."/>
            <person name="Hotuta T."/>
            <person name="Kusano J."/>
            <person name="Kanehori K."/>
            <person name="Takahashi-Fujii A."/>
            <person name="Hara H."/>
            <person name="Tanase T.-O."/>
            <person name="Nomura Y."/>
            <person name="Togiya S."/>
            <person name="Komai F."/>
            <person name="Hara R."/>
            <person name="Takeuchi K."/>
            <person name="Arita M."/>
            <person name="Imose N."/>
            <person name="Musashino K."/>
            <person name="Yuuki H."/>
            <person name="Oshima A."/>
            <person name="Sasaki N."/>
            <person name="Aotsuka S."/>
            <person name="Yoshikawa Y."/>
            <person name="Matsunawa H."/>
            <person name="Ichihara T."/>
            <person name="Shiohata N."/>
            <person name="Sano S."/>
            <person name="Moriya S."/>
            <person name="Momiyama H."/>
            <person name="Satoh N."/>
            <person name="Takami S."/>
            <person name="Terashima Y."/>
            <person name="Suzuki O."/>
            <person name="Nakagawa S."/>
            <person name="Senoh A."/>
            <person name="Mizoguchi H."/>
            <person name="Goto Y."/>
            <person name="Shimizu F."/>
            <person name="Wakebe H."/>
            <person name="Hishigaki H."/>
            <person name="Watanabe T."/>
            <person name="Sugiyama A."/>
            <person name="Takemoto M."/>
            <person name="Kawakami B."/>
            <person name="Yamazaki M."/>
            <person name="Watanabe K."/>
            <person name="Kumagai A."/>
            <person name="Itakura S."/>
            <person name="Fukuzumi Y."/>
            <person name="Fujimori Y."/>
            <person name="Komiyama M."/>
            <person name="Tashiro H."/>
            <person name="Tanigami A."/>
            <person name="Fujiwara T."/>
            <person name="Ono T."/>
            <person name="Yamada K."/>
            <person name="Fujii Y."/>
            <person name="Ozaki K."/>
            <person name="Hirao M."/>
            <person name="Ohmori Y."/>
            <person name="Kawabata A."/>
            <person name="Hikiji T."/>
            <person name="Kobatake N."/>
            <person name="Inagaki H."/>
            <person name="Ikema Y."/>
            <person name="Okamoto S."/>
            <person name="Okitani R."/>
            <person name="Kawakami T."/>
            <person name="Noguchi S."/>
            <person name="Itoh T."/>
            <person name="Shigeta K."/>
            <person name="Senba T."/>
            <person name="Matsumura K."/>
            <person name="Nakajima Y."/>
            <person name="Mizuno T."/>
            <person name="Morinaga M."/>
            <person name="Sasaki M."/>
            <person name="Togashi T."/>
            <person name="Oyama M."/>
            <person name="Hata H."/>
            <person name="Watanabe M."/>
            <person name="Komatsu T."/>
            <person name="Mizushima-Sugano J."/>
            <person name="Satoh T."/>
            <person name="Shirai Y."/>
            <person name="Takahashi Y."/>
            <person name="Nakagawa K."/>
            <person name="Okumura K."/>
            <person name="Nagase T."/>
            <person name="Nomura N."/>
            <person name="Kikuchi H."/>
            <person name="Masuho Y."/>
            <person name="Yamashita R."/>
            <person name="Nakai K."/>
            <person name="Yada T."/>
            <person name="Nakamura Y."/>
            <person name="Ohara O."/>
            <person name="Isogai T."/>
            <person name="Sugano S."/>
        </authorList>
    </citation>
    <scope>NUCLEOTIDE SEQUENCE [LARGE SCALE MRNA]</scope>
    <source>
        <tissue>Small intestine</tissue>
    </source>
</reference>
<reference key="5">
    <citation type="submission" date="2005-07" db="EMBL/GenBank/DDBJ databases">
        <authorList>
            <person name="Mural R.J."/>
            <person name="Istrail S."/>
            <person name="Sutton G.G."/>
            <person name="Florea L."/>
            <person name="Halpern A.L."/>
            <person name="Mobarry C.M."/>
            <person name="Lippert R."/>
            <person name="Walenz B."/>
            <person name="Shatkay H."/>
            <person name="Dew I."/>
            <person name="Miller J.R."/>
            <person name="Flanigan M.J."/>
            <person name="Edwards N.J."/>
            <person name="Bolanos R."/>
            <person name="Fasulo D."/>
            <person name="Halldorsson B.V."/>
            <person name="Hannenhalli S."/>
            <person name="Turner R."/>
            <person name="Yooseph S."/>
            <person name="Lu F."/>
            <person name="Nusskern D.R."/>
            <person name="Shue B.C."/>
            <person name="Zheng X.H."/>
            <person name="Zhong F."/>
            <person name="Delcher A.L."/>
            <person name="Huson D.H."/>
            <person name="Kravitz S.A."/>
            <person name="Mouchard L."/>
            <person name="Reinert K."/>
            <person name="Remington K.A."/>
            <person name="Clark A.G."/>
            <person name="Waterman M.S."/>
            <person name="Eichler E.E."/>
            <person name="Adams M.D."/>
            <person name="Hunkapiller M.W."/>
            <person name="Myers E.W."/>
            <person name="Venter J.C."/>
        </authorList>
    </citation>
    <scope>NUCLEOTIDE SEQUENCE [LARGE SCALE GENOMIC DNA]</scope>
</reference>
<reference key="6">
    <citation type="journal article" date="2004" name="Genome Res.">
        <title>The status, quality, and expansion of the NIH full-length cDNA project: the Mammalian Gene Collection (MGC).</title>
        <authorList>
            <consortium name="The MGC Project Team"/>
        </authorList>
    </citation>
    <scope>NUCLEOTIDE SEQUENCE [LARGE SCALE MRNA]</scope>
    <source>
        <tissue>B-cell</tissue>
        <tissue>Lymph</tissue>
    </source>
</reference>
<reference key="7">
    <citation type="journal article" date="1996" name="J. Exp. Med.">
        <title>Newly identified pair of proteasomal subunits regulated reciprocally by interferon gamma.</title>
        <authorList>
            <person name="Hisamatsu H."/>
            <person name="Shimbara N."/>
            <person name="Saito Y."/>
            <person name="Kristensen P."/>
            <person name="Hendil K.B."/>
            <person name="Fujiwara T."/>
            <person name="Takahashi E."/>
            <person name="Tanahashi N."/>
            <person name="Tamura T."/>
            <person name="Ichihara A."/>
            <person name="Tanaka K."/>
        </authorList>
    </citation>
    <scope>INDUCTION BY IFNG</scope>
</reference>
<reference key="8">
    <citation type="journal article" date="1999" name="J. Biol. Chem.">
        <title>Interferon regulatory factor 1 mediates the interferon-gamma induction of the human immunoproteasome subunit multicatalytic endopeptidase complex-like 1.</title>
        <authorList>
            <person name="Foss G.S."/>
            <person name="Prydz H."/>
        </authorList>
    </citation>
    <scope>INDUCTION BY IFNG AND IRF1</scope>
</reference>
<reference key="9">
    <citation type="journal article" date="2001" name="Blood">
        <title>Tumor necrosis factor-alpha induces coordinated changes in major histocompatibility class I presentation pathway, resulting in increased stability of class I complexes at the cell surface.</title>
        <authorList>
            <person name="Hallermalm K."/>
            <person name="Seki K."/>
            <person name="Wei C."/>
            <person name="Castelli C."/>
            <person name="Rivoltini L."/>
            <person name="Kiessling R."/>
            <person name="Levitskaya J."/>
        </authorList>
    </citation>
    <scope>INDUCTION BY TNF AND IFNG</scope>
</reference>
<reference key="10">
    <citation type="journal article" date="2001" name="Int. Immunol.">
        <title>Bipartite regulation of different components of the MHC class I antigen-processing machinery during dendritic cell maturation.</title>
        <authorList>
            <person name="Li J."/>
            <person name="Schuler-Thurner B."/>
            <person name="Schuler G."/>
            <person name="Huber C."/>
            <person name="Seliger B."/>
        </authorList>
    </citation>
    <scope>DEVELOPMENTAL STAGE</scope>
</reference>
<reference key="11">
    <citation type="journal article" date="2003" name="FEBS Lett.">
        <title>Human immunodeficiency virus-1 Tat protein interacts with distinct proteasomal alpha and beta subunits.</title>
        <authorList>
            <person name="Apcher G.S."/>
            <person name="Heink S."/>
            <person name="Zantopf D."/>
            <person name="Kloetzel P.-M."/>
            <person name="Schmid H.-P."/>
            <person name="Mayer R.J."/>
            <person name="Krueger E."/>
        </authorList>
    </citation>
    <scope>INTERACTION WITH HIV-1 TAT (MICROBIAL INFECTION)</scope>
</reference>
<reference key="12">
    <citation type="journal article" date="2004" name="Toxicon">
        <title>Potential effects of tetrodotoxin exposure to human glial cells postulated using microarray approach.</title>
        <authorList>
            <person name="Raghavendra Prasad H.S."/>
            <person name="Qi Z."/>
            <person name="Srinivasan K.N."/>
            <person name="Gopalakrishnakone P."/>
        </authorList>
    </citation>
    <scope>INDUCTION BY TETRODOTOXIN</scope>
</reference>
<reference key="13">
    <citation type="journal article" date="2005" name="FEBS Lett.">
        <title>IRF-1 mediates upregulation of LMP7 by IFN-gamma and concerted expression of immunosubunits of the proteasome.</title>
        <authorList>
            <person name="Namiki S."/>
            <person name="Nakamura T."/>
            <person name="Oshima S."/>
            <person name="Yamazaki M."/>
            <person name="Sekine Y."/>
            <person name="Tsuchiya K."/>
            <person name="Okamoto R."/>
            <person name="Kanai T."/>
            <person name="Watanabe M."/>
        </authorList>
    </citation>
    <scope>INDUCTION BY IFNG AND IRF1</scope>
</reference>
<reference key="14">
    <citation type="journal article" date="2007" name="Inflamm. Bowel Dis.">
        <title>Genome-wide gene expression differences in Crohn's disease and ulcerative colitis from endoscopic pinch biopsies: insights into distinctive pathogenesis.</title>
        <authorList>
            <person name="Wu F."/>
            <person name="Dassopoulos T."/>
            <person name="Cope L."/>
            <person name="Maitra A."/>
            <person name="Brant S.R."/>
            <person name="Harris M.L."/>
            <person name="Bayless T.M."/>
            <person name="Parmigiani G."/>
            <person name="Chakravarti S."/>
        </authorList>
    </citation>
    <scope>INDUCTION</scope>
</reference>
<reference key="15">
    <citation type="journal article" date="2008" name="Mol. Cell. Biol.">
        <title>CD40 induces antigen transporter and immunoproteasome gene expression in carcinomas via the coordinated action of NF-kappaB and of NF-kappaB-mediated de novo synthesis of IRF-1.</title>
        <authorList>
            <person name="Moschonas A."/>
            <person name="Kouraki M."/>
            <person name="Knox P.G."/>
            <person name="Thymiakou E."/>
            <person name="Kardassis D."/>
            <person name="Eliopoulos A.G."/>
        </authorList>
    </citation>
    <scope>INDUCTION BY CD40L</scope>
</reference>
<reference key="16">
    <citation type="journal article" date="2011" name="BMC Syst. Biol.">
        <title>Initial characterization of the human central proteome.</title>
        <authorList>
            <person name="Burkard T.R."/>
            <person name="Planyavsky M."/>
            <person name="Kaupe I."/>
            <person name="Breitwieser F.P."/>
            <person name="Buerckstuemmer T."/>
            <person name="Bennett K.L."/>
            <person name="Superti-Furga G."/>
            <person name="Colinge J."/>
        </authorList>
    </citation>
    <scope>IDENTIFICATION BY MASS SPECTROMETRY [LARGE SCALE ANALYSIS]</scope>
</reference>
<reference key="17">
    <citation type="journal article" date="2012" name="Proc. Natl. Acad. Sci. U.S.A.">
        <title>N-terminal acetylome analyses and functional insights of the N-terminal acetyltransferase NatB.</title>
        <authorList>
            <person name="Van Damme P."/>
            <person name="Lasa M."/>
            <person name="Polevoda B."/>
            <person name="Gazquez C."/>
            <person name="Elosegui-Artola A."/>
            <person name="Kim D.S."/>
            <person name="De Juan-Pardo E."/>
            <person name="Demeyer K."/>
            <person name="Hole K."/>
            <person name="Larrea E."/>
            <person name="Timmerman E."/>
            <person name="Prieto J."/>
            <person name="Arnesen T."/>
            <person name="Sherman F."/>
            <person name="Gevaert K."/>
            <person name="Aldabe R."/>
        </authorList>
    </citation>
    <scope>ACETYLATION [LARGE SCALE ANALYSIS] AT MET-1</scope>
    <scope>IDENTIFICATION BY MASS SPECTROMETRY [LARGE SCALE ANALYSIS]</scope>
</reference>
<reference key="18">
    <citation type="journal article" date="2013" name="J. Proteome Res.">
        <title>Toward a comprehensive characterization of a human cancer cell phosphoproteome.</title>
        <authorList>
            <person name="Zhou H."/>
            <person name="Di Palma S."/>
            <person name="Preisinger C."/>
            <person name="Peng M."/>
            <person name="Polat A.N."/>
            <person name="Heck A.J."/>
            <person name="Mohammed S."/>
        </authorList>
    </citation>
    <scope>PHOSPHORYLATION [LARGE SCALE ANALYSIS] AT SER-230</scope>
    <scope>IDENTIFICATION BY MASS SPECTROMETRY [LARGE SCALE ANALYSIS]</scope>
    <source>
        <tissue>Erythroleukemia</tissue>
    </source>
</reference>
<reference key="19">
    <citation type="journal article" date="2014" name="J. Proteomics">
        <title>An enzyme assisted RP-RPLC approach for in-depth analysis of human liver phosphoproteome.</title>
        <authorList>
            <person name="Bian Y."/>
            <person name="Song C."/>
            <person name="Cheng K."/>
            <person name="Dong M."/>
            <person name="Wang F."/>
            <person name="Huang J."/>
            <person name="Sun D."/>
            <person name="Wang L."/>
            <person name="Ye M."/>
            <person name="Zou H."/>
        </authorList>
    </citation>
    <scope>IDENTIFICATION BY MASS SPECTROMETRY [LARGE SCALE ANALYSIS]</scope>
    <source>
        <tissue>Liver</tissue>
    </source>
</reference>
<reference key="20">
    <citation type="journal article" date="2020" name="J. Allergy Clin. Immunol.">
        <title>PSMB10, the last immunoproteasome gene missing for PRAAS.</title>
        <authorList>
            <person name="Sarrabay G."/>
            <person name="Mechin D."/>
            <person name="Salhi A."/>
            <person name="Boursier G."/>
            <person name="Rittore C."/>
            <person name="Crow Y."/>
            <person name="Rice G."/>
            <person name="Tran T.A."/>
            <person name="Cezar R."/>
            <person name="Duffy D."/>
            <person name="Bondet V."/>
            <person name="Boudhane L."/>
            <person name="Broca C."/>
            <person name="Kant B.P."/>
            <person name="VanGijn M."/>
            <person name="Grandemange S."/>
            <person name="Richard E."/>
            <person name="Apparailly F."/>
            <person name="Touitou I."/>
        </authorList>
    </citation>
    <scope>INVOLVEMENT IN PRAAS5</scope>
    <scope>VARIANT PRAAS5 SER-14</scope>
    <scope>CHARACTERIZATION OF VARIANT PRAAS5 SER-14</scope>
</reference>
<reference key="21">
    <citation type="journal article" date="2024" name="Am. J. Hum. Genet.">
        <title>Expanding the PRAAS spectrum: De novo mutations of immunoproteasome subunit beta-type 10 in six infants with SCID-Omenn syndrome.</title>
        <authorList>
            <person name="van der Made C.I."/>
            <person name="Kersten S."/>
            <person name="Chorin O."/>
            <person name="Engelhardt K.R."/>
            <person name="Ramakrishnan G."/>
            <person name="Griffin H."/>
            <person name="Schim van der Loeff I."/>
            <person name="Venselaar H."/>
            <person name="Rothschild A.R."/>
            <person name="Segev M."/>
            <person name="Schuurs-Hoeijmakers J.H.M."/>
            <person name="Mantere T."/>
            <person name="Essers R."/>
            <person name="Esteki M.Z."/>
            <person name="Avital A.L."/>
            <person name="Loo P.S."/>
            <person name="Simons A."/>
            <person name="Pfundt R."/>
            <person name="Warris A."/>
            <person name="Seyger M.M."/>
            <person name="van de Veerdonk F.L."/>
            <person name="Netea M.G."/>
            <person name="Slatter M.A."/>
            <person name="Flood T."/>
            <person name="Gennery A.R."/>
            <person name="Simon A.J."/>
            <person name="Lev A."/>
            <person name="Frizinsky S."/>
            <person name="Barel O."/>
            <person name="van der Burg M."/>
            <person name="Somech R."/>
            <person name="Hambleton S."/>
            <person name="Henriet S.S.V."/>
            <person name="Hoischen A."/>
        </authorList>
    </citation>
    <scope>INVOLVEMENT IN IMD121</scope>
    <scope>VARIANTS IMD121 HIS-56 AND ARG-201</scope>
</reference>
<dbReference type="EC" id="3.4.25.1"/>
<dbReference type="EMBL" id="X71874">
    <property type="protein sequence ID" value="CAA50709.1"/>
    <property type="molecule type" value="Genomic_DNA"/>
</dbReference>
<dbReference type="EMBL" id="Y13640">
    <property type="protein sequence ID" value="CAA73982.1"/>
    <property type="molecule type" value="mRNA"/>
</dbReference>
<dbReference type="EMBL" id="BT019723">
    <property type="protein sequence ID" value="AAV38528.1"/>
    <property type="molecule type" value="mRNA"/>
</dbReference>
<dbReference type="EMBL" id="BT019724">
    <property type="protein sequence ID" value="AAV38529.1"/>
    <property type="molecule type" value="mRNA"/>
</dbReference>
<dbReference type="EMBL" id="AK312208">
    <property type="protein sequence ID" value="BAG35141.1"/>
    <property type="molecule type" value="mRNA"/>
</dbReference>
<dbReference type="EMBL" id="CH471092">
    <property type="protein sequence ID" value="EAW83187.1"/>
    <property type="molecule type" value="Genomic_DNA"/>
</dbReference>
<dbReference type="EMBL" id="BC017198">
    <property type="protein sequence ID" value="AAH17198.1"/>
    <property type="molecule type" value="mRNA"/>
</dbReference>
<dbReference type="EMBL" id="BC052369">
    <property type="protein sequence ID" value="AAH52369.1"/>
    <property type="molecule type" value="mRNA"/>
</dbReference>
<dbReference type="CCDS" id="CCDS10853.1"/>
<dbReference type="PIR" id="I38135">
    <property type="entry name" value="I38135"/>
</dbReference>
<dbReference type="RefSeq" id="NP_002792.1">
    <property type="nucleotide sequence ID" value="NM_002801.4"/>
</dbReference>
<dbReference type="PDB" id="6AVO">
    <property type="method" value="EM"/>
    <property type="resolution" value="3.80 A"/>
    <property type="chains" value="B/E=40-273"/>
</dbReference>
<dbReference type="PDB" id="6E5B">
    <property type="method" value="X-ray"/>
    <property type="resolution" value="2.77 A"/>
    <property type="chains" value="H/V=1-273"/>
</dbReference>
<dbReference type="PDB" id="6HV3">
    <property type="method" value="X-ray"/>
    <property type="resolution" value="2.70 A"/>
    <property type="chains" value="H/V=40-92"/>
</dbReference>
<dbReference type="PDB" id="6HV4">
    <property type="method" value="X-ray"/>
    <property type="resolution" value="3.00 A"/>
    <property type="chains" value="H/V=40-92"/>
</dbReference>
<dbReference type="PDB" id="6HV5">
    <property type="method" value="X-ray"/>
    <property type="resolution" value="3.00 A"/>
    <property type="chains" value="H/V=40-92"/>
</dbReference>
<dbReference type="PDB" id="6HV7">
    <property type="method" value="X-ray"/>
    <property type="resolution" value="3.40 A"/>
    <property type="chains" value="H/V=40-92"/>
</dbReference>
<dbReference type="PDB" id="6HVA">
    <property type="method" value="X-ray"/>
    <property type="resolution" value="2.90 A"/>
    <property type="chains" value="H/V=40-92"/>
</dbReference>
<dbReference type="PDB" id="6HVR">
    <property type="method" value="X-ray"/>
    <property type="resolution" value="2.70 A"/>
    <property type="chains" value="H/V=40-92"/>
</dbReference>
<dbReference type="PDB" id="6HVS">
    <property type="method" value="X-ray"/>
    <property type="resolution" value="3.10 A"/>
    <property type="chains" value="H/V=40-92"/>
</dbReference>
<dbReference type="PDB" id="6HVT">
    <property type="method" value="X-ray"/>
    <property type="resolution" value="2.90 A"/>
    <property type="chains" value="H/V=40-92"/>
</dbReference>
<dbReference type="PDB" id="6HVU">
    <property type="method" value="X-ray"/>
    <property type="resolution" value="2.90 A"/>
    <property type="chains" value="H/V=40-92"/>
</dbReference>
<dbReference type="PDB" id="6HVV">
    <property type="method" value="X-ray"/>
    <property type="resolution" value="2.70 A"/>
    <property type="chains" value="H/V=40-92"/>
</dbReference>
<dbReference type="PDB" id="6HVW">
    <property type="method" value="X-ray"/>
    <property type="resolution" value="3.00 A"/>
    <property type="chains" value="H/V=40-92"/>
</dbReference>
<dbReference type="PDB" id="7AWE">
    <property type="method" value="X-ray"/>
    <property type="resolution" value="2.29 A"/>
    <property type="chains" value="I/W=40-262"/>
</dbReference>
<dbReference type="PDB" id="7B12">
    <property type="method" value="X-ray"/>
    <property type="resolution" value="2.43 A"/>
    <property type="chains" value="i/w=40-262"/>
</dbReference>
<dbReference type="PDB" id="9FSV">
    <property type="method" value="X-ray"/>
    <property type="resolution" value="2.75 A"/>
    <property type="chains" value="H/V=43-92"/>
</dbReference>
<dbReference type="PDBsum" id="6AVO"/>
<dbReference type="PDBsum" id="6E5B"/>
<dbReference type="PDBsum" id="6HV3"/>
<dbReference type="PDBsum" id="6HV4"/>
<dbReference type="PDBsum" id="6HV5"/>
<dbReference type="PDBsum" id="6HV7"/>
<dbReference type="PDBsum" id="6HVA"/>
<dbReference type="PDBsum" id="6HVR"/>
<dbReference type="PDBsum" id="6HVS"/>
<dbReference type="PDBsum" id="6HVT"/>
<dbReference type="PDBsum" id="6HVU"/>
<dbReference type="PDBsum" id="6HVV"/>
<dbReference type="PDBsum" id="6HVW"/>
<dbReference type="PDBsum" id="7AWE"/>
<dbReference type="PDBsum" id="7B12"/>
<dbReference type="PDBsum" id="9FSV"/>
<dbReference type="EMDB" id="EMD-60139"/>
<dbReference type="EMDB" id="EMD-7010"/>
<dbReference type="SMR" id="P40306"/>
<dbReference type="BioGRID" id="111672">
    <property type="interactions" value="91"/>
</dbReference>
<dbReference type="ComplexPortal" id="CPX-9003">
    <property type="entry name" value="20S immunoproteasome complex"/>
</dbReference>
<dbReference type="ComplexPortal" id="CPX-9004">
    <property type="entry name" value="20S thymoproteasome complex"/>
</dbReference>
<dbReference type="FunCoup" id="P40306">
    <property type="interactions" value="131"/>
</dbReference>
<dbReference type="IntAct" id="P40306">
    <property type="interactions" value="78"/>
</dbReference>
<dbReference type="MINT" id="P40306"/>
<dbReference type="STRING" id="9606.ENSP00000351314"/>
<dbReference type="BindingDB" id="P40306"/>
<dbReference type="ChEMBL" id="CHEMBL3317334"/>
<dbReference type="DrugBank" id="DB08889">
    <property type="generic name" value="Carfilzomib"/>
</dbReference>
<dbReference type="DrugCentral" id="P40306"/>
<dbReference type="MEROPS" id="T01.014"/>
<dbReference type="GlyGen" id="P40306">
    <property type="glycosylation" value="1 site, 1 O-linked glycan (1 site)"/>
</dbReference>
<dbReference type="iPTMnet" id="P40306"/>
<dbReference type="PhosphoSitePlus" id="P40306"/>
<dbReference type="BioMuta" id="PSMB10"/>
<dbReference type="DMDM" id="730376"/>
<dbReference type="OGP" id="P40306"/>
<dbReference type="jPOST" id="P40306"/>
<dbReference type="MassIVE" id="P40306"/>
<dbReference type="PaxDb" id="9606-ENSP00000351314"/>
<dbReference type="PeptideAtlas" id="P40306"/>
<dbReference type="ProteomicsDB" id="55360"/>
<dbReference type="Pumba" id="P40306"/>
<dbReference type="Antibodypedia" id="29677">
    <property type="antibodies" value="242 antibodies from 34 providers"/>
</dbReference>
<dbReference type="CPTC" id="P40306">
    <property type="antibodies" value="1 antibody"/>
</dbReference>
<dbReference type="DNASU" id="5699"/>
<dbReference type="Ensembl" id="ENST00000358514.9">
    <property type="protein sequence ID" value="ENSP00000351314.4"/>
    <property type="gene ID" value="ENSG00000205220.12"/>
</dbReference>
<dbReference type="GeneID" id="5699"/>
<dbReference type="KEGG" id="hsa:5699"/>
<dbReference type="MANE-Select" id="ENST00000358514.9">
    <property type="protein sequence ID" value="ENSP00000351314.4"/>
    <property type="RefSeq nucleotide sequence ID" value="NM_002801.4"/>
    <property type="RefSeq protein sequence ID" value="NP_002792.1"/>
</dbReference>
<dbReference type="UCSC" id="uc002eux.3">
    <property type="organism name" value="human"/>
</dbReference>
<dbReference type="AGR" id="HGNC:9538"/>
<dbReference type="CTD" id="5699"/>
<dbReference type="DisGeNET" id="5699"/>
<dbReference type="GeneCards" id="PSMB10"/>
<dbReference type="HGNC" id="HGNC:9538">
    <property type="gene designation" value="PSMB10"/>
</dbReference>
<dbReference type="HPA" id="ENSG00000205220">
    <property type="expression patterns" value="Tissue enhanced (lymphoid)"/>
</dbReference>
<dbReference type="MalaCards" id="PSMB10"/>
<dbReference type="MIM" id="176847">
    <property type="type" value="gene"/>
</dbReference>
<dbReference type="MIM" id="619175">
    <property type="type" value="phenotype"/>
</dbReference>
<dbReference type="MIM" id="620807">
    <property type="type" value="phenotype"/>
</dbReference>
<dbReference type="neXtProt" id="NX_P40306"/>
<dbReference type="OpenTargets" id="ENSG00000205220"/>
<dbReference type="PharmGKB" id="PA33883"/>
<dbReference type="VEuPathDB" id="HostDB:ENSG00000205220"/>
<dbReference type="eggNOG" id="KOG0173">
    <property type="taxonomic scope" value="Eukaryota"/>
</dbReference>
<dbReference type="GeneTree" id="ENSGT00940000161047"/>
<dbReference type="HOGENOM" id="CLU_035750_3_0_1"/>
<dbReference type="InParanoid" id="P40306"/>
<dbReference type="OMA" id="GTQVDLC"/>
<dbReference type="OrthoDB" id="429533at2759"/>
<dbReference type="PAN-GO" id="P40306">
    <property type="GO annotations" value="5 GO annotations based on evolutionary models"/>
</dbReference>
<dbReference type="PhylomeDB" id="P40306"/>
<dbReference type="TreeFam" id="TF106222"/>
<dbReference type="PathwayCommons" id="P40306"/>
<dbReference type="Reactome" id="R-HSA-9907900">
    <property type="pathway name" value="Proteasome assembly"/>
</dbReference>
<dbReference type="SignaLink" id="P40306"/>
<dbReference type="SIGNOR" id="P40306"/>
<dbReference type="BioGRID-ORCS" id="5699">
    <property type="hits" value="21 hits in 1174 CRISPR screens"/>
</dbReference>
<dbReference type="CD-CODE" id="91857CE7">
    <property type="entry name" value="Nucleolus"/>
</dbReference>
<dbReference type="ChiTaRS" id="PSMB10">
    <property type="organism name" value="human"/>
</dbReference>
<dbReference type="GeneWiki" id="PSMB10"/>
<dbReference type="GenomeRNAi" id="5699"/>
<dbReference type="Pharos" id="P40306">
    <property type="development level" value="Tchem"/>
</dbReference>
<dbReference type="PRO" id="PR:P40306"/>
<dbReference type="Proteomes" id="UP000005640">
    <property type="component" value="Chromosome 16"/>
</dbReference>
<dbReference type="RNAct" id="P40306">
    <property type="molecule type" value="protein"/>
</dbReference>
<dbReference type="Bgee" id="ENSG00000205220">
    <property type="expression patterns" value="Expressed in granulocyte and 97 other cell types or tissues"/>
</dbReference>
<dbReference type="ExpressionAtlas" id="P40306">
    <property type="expression patterns" value="baseline and differential"/>
</dbReference>
<dbReference type="GO" id="GO:0005829">
    <property type="term" value="C:cytosol"/>
    <property type="evidence" value="ECO:0000318"/>
    <property type="project" value="GO_Central"/>
</dbReference>
<dbReference type="GO" id="GO:0005634">
    <property type="term" value="C:nucleus"/>
    <property type="evidence" value="ECO:0000318"/>
    <property type="project" value="GO_Central"/>
</dbReference>
<dbReference type="GO" id="GO:0000502">
    <property type="term" value="C:proteasome complex"/>
    <property type="evidence" value="ECO:0000304"/>
    <property type="project" value="ProtInc"/>
</dbReference>
<dbReference type="GO" id="GO:0005839">
    <property type="term" value="C:proteasome core complex"/>
    <property type="evidence" value="ECO:0000250"/>
    <property type="project" value="UniProtKB"/>
</dbReference>
<dbReference type="GO" id="GO:0019774">
    <property type="term" value="C:proteasome core complex, beta-subunit complex"/>
    <property type="evidence" value="ECO:0000250"/>
    <property type="project" value="UniProtKB"/>
</dbReference>
<dbReference type="GO" id="GO:1990111">
    <property type="term" value="C:spermatoproteasome complex"/>
    <property type="evidence" value="ECO:0000250"/>
    <property type="project" value="UniProtKB"/>
</dbReference>
<dbReference type="GO" id="GO:0004175">
    <property type="term" value="F:endopeptidase activity"/>
    <property type="evidence" value="ECO:0000318"/>
    <property type="project" value="GO_Central"/>
</dbReference>
<dbReference type="GO" id="GO:0004298">
    <property type="term" value="F:threonine-type endopeptidase activity"/>
    <property type="evidence" value="ECO:0007669"/>
    <property type="project" value="UniProtKB-KW"/>
</dbReference>
<dbReference type="GO" id="GO:0000902">
    <property type="term" value="P:cell morphogenesis"/>
    <property type="evidence" value="ECO:0007669"/>
    <property type="project" value="Ensembl"/>
</dbReference>
<dbReference type="GO" id="GO:0006959">
    <property type="term" value="P:humoral immune response"/>
    <property type="evidence" value="ECO:0000304"/>
    <property type="project" value="ProtInc"/>
</dbReference>
<dbReference type="GO" id="GO:0043161">
    <property type="term" value="P:proteasome-mediated ubiquitin-dependent protein catabolic process"/>
    <property type="evidence" value="ECO:0000318"/>
    <property type="project" value="GO_Central"/>
</dbReference>
<dbReference type="GO" id="GO:0042098">
    <property type="term" value="P:T cell proliferation"/>
    <property type="evidence" value="ECO:0007669"/>
    <property type="project" value="Ensembl"/>
</dbReference>
<dbReference type="CDD" id="cd03763">
    <property type="entry name" value="proteasome_beta_type_7"/>
    <property type="match status" value="1"/>
</dbReference>
<dbReference type="FunFam" id="3.60.20.10:FF:000005">
    <property type="entry name" value="Proteasome subunit beta type-2"/>
    <property type="match status" value="1"/>
</dbReference>
<dbReference type="Gene3D" id="3.60.20.10">
    <property type="entry name" value="Glutamine Phosphoribosylpyrophosphate, subunit 1, domain 1"/>
    <property type="match status" value="1"/>
</dbReference>
<dbReference type="InterPro" id="IPR029055">
    <property type="entry name" value="Ntn_hydrolases_N"/>
</dbReference>
<dbReference type="InterPro" id="IPR000243">
    <property type="entry name" value="Pept_T1A_subB"/>
</dbReference>
<dbReference type="InterPro" id="IPR024689">
    <property type="entry name" value="Proteasome_bsu_C"/>
</dbReference>
<dbReference type="InterPro" id="IPR016050">
    <property type="entry name" value="Proteasome_bsu_CS"/>
</dbReference>
<dbReference type="InterPro" id="IPR001353">
    <property type="entry name" value="Proteasome_sua/b"/>
</dbReference>
<dbReference type="InterPro" id="IPR023333">
    <property type="entry name" value="Proteasome_suB-type"/>
</dbReference>
<dbReference type="PANTHER" id="PTHR32194">
    <property type="entry name" value="METALLOPROTEASE TLDD"/>
    <property type="match status" value="1"/>
</dbReference>
<dbReference type="PANTHER" id="PTHR32194:SF4">
    <property type="entry name" value="PROTEASOME SUBUNIT BETA TYPE-7"/>
    <property type="match status" value="1"/>
</dbReference>
<dbReference type="Pfam" id="PF12465">
    <property type="entry name" value="Pr_beta_C"/>
    <property type="match status" value="1"/>
</dbReference>
<dbReference type="Pfam" id="PF00227">
    <property type="entry name" value="Proteasome"/>
    <property type="match status" value="1"/>
</dbReference>
<dbReference type="PRINTS" id="PR00141">
    <property type="entry name" value="PROTEASOME"/>
</dbReference>
<dbReference type="SUPFAM" id="SSF56235">
    <property type="entry name" value="N-terminal nucleophile aminohydrolases (Ntn hydrolases)"/>
    <property type="match status" value="1"/>
</dbReference>
<dbReference type="PROSITE" id="PS00854">
    <property type="entry name" value="PROTEASOME_BETA_1"/>
    <property type="match status" value="1"/>
</dbReference>
<dbReference type="PROSITE" id="PS51476">
    <property type="entry name" value="PROTEASOME_BETA_2"/>
    <property type="match status" value="1"/>
</dbReference>